<gene>
    <name type="primary">IL1A</name>
    <name type="synonym">IL1F1</name>
</gene>
<reference key="1">
    <citation type="journal article" date="1985" name="Nature">
        <title>Cloning, sequence and expression of two distinct human interleukin-1 complementary DNAs.</title>
        <authorList>
            <person name="March C.J."/>
            <person name="Mosley B."/>
            <person name="Larsen A."/>
            <person name="Cerretti D.P."/>
            <person name="Braedt G."/>
            <person name="Price V."/>
            <person name="Gillis S."/>
            <person name="Henney C.S."/>
            <person name="Kronheim S.R."/>
            <person name="Grabstein K."/>
            <person name="Conlon P.J."/>
            <person name="Hopp T.P."/>
            <person name="Cosman D."/>
        </authorList>
    </citation>
    <scope>NUCLEOTIDE SEQUENCE [MRNA]</scope>
</reference>
<reference key="2">
    <citation type="journal article" date="1986" name="Nucleic Acids Res.">
        <title>Complete nucleotide sequence of the gene for human interleukin 1 alpha.</title>
        <authorList>
            <person name="Furutani Y."/>
            <person name="Notake M."/>
            <person name="Fukui T."/>
            <person name="Ohue M."/>
            <person name="Nomura H."/>
            <person name="Yamada M."/>
            <person name="Nakamura S."/>
        </authorList>
    </citation>
    <scope>NUCLEOTIDE SEQUENCE [GENOMIC DNA]</scope>
</reference>
<reference key="3">
    <citation type="journal article" date="1985" name="Nucleic Acids Res.">
        <title>Cloning and characterization of the cDNAs for human and rabbit interleukin-1 precursor.</title>
        <authorList>
            <person name="Furutani Y."/>
            <person name="Notake M."/>
            <person name="Yamayoshi M."/>
            <person name="Yamagishi J."/>
            <person name="Nomura H."/>
            <person name="Ohue M."/>
            <person name="Furuta R."/>
            <person name="Fukui T."/>
            <person name="Yamada M."/>
            <person name="Nakamura S."/>
        </authorList>
    </citation>
    <scope>NUCLEOTIDE SEQUENCE [MRNA]</scope>
    <scope>VARIANT SER-114</scope>
</reference>
<reference key="4">
    <citation type="journal article" date="1989" name="Dokl. Akad. Nauk SSSR">
        <title>Cloning of the cDNA coding for human prointerleukin-1 alpha and prointerleukin-1 beta.</title>
        <authorList>
            <person name="Kotenko S.V."/>
            <person name="Bulenkov M.T."/>
            <person name="Veiko V.P."/>
            <person name="Epishin S.M."/>
            <person name="Lomakin I.B."/>
            <person name="Emel'Yanov A.V."/>
            <person name="Kozlov A.P."/>
            <person name="Konusova V.G."/>
            <person name="Kotov A.Y."/>
            <person name="Kurbatova T.V."/>
            <person name="Reshetnikov V.L."/>
            <person name="Simbirtsev A.S."/>
            <person name="Ketlinskii S.A."/>
            <person name="Vinetskii Y.P."/>
        </authorList>
    </citation>
    <scope>NUCLEOTIDE SEQUENCE [MRNA]</scope>
    <scope>VARIANT SER-114</scope>
</reference>
<reference key="5">
    <citation type="journal article" date="1986" name="J. Immunol.">
        <title>Recombinant human interleukin 1 alpha: purification and biological characterization.</title>
        <authorList>
            <person name="Gubler U."/>
            <person name="Chua A.O."/>
            <person name="Stern A.S."/>
            <person name="Hellmann C.P."/>
            <person name="Vitek M.P."/>
            <person name="Dechiara T.M."/>
            <person name="Benjamin W.R."/>
            <person name="Collier K.J."/>
            <person name="Dukovich M."/>
            <person name="Familletti P.C."/>
            <person name="Fiedler-Nagy C."/>
            <person name="Jenson J."/>
            <person name="Kaffka K."/>
            <person name="Kilian P.L."/>
            <person name="Stremlo D."/>
            <person name="Wittreich B.H."/>
            <person name="Woehle D."/>
            <person name="Mizel S.B."/>
            <person name="Lomedico P.T."/>
        </authorList>
    </citation>
    <scope>NUCLEOTIDE SEQUENCE [MRNA]</scope>
</reference>
<reference key="6">
    <citation type="journal article" date="1987" name="Biochem. Biophys. Res. Commun.">
        <title>cDNA cloning of IL-1 alpha and IL-1 beta from mRNA of U937 cell line.</title>
        <authorList>
            <person name="Nishida T."/>
            <person name="Nishino N."/>
            <person name="Takano M."/>
            <person name="Kawai K."/>
            <person name="Bando K."/>
            <person name="Masui Y."/>
            <person name="Nakai S."/>
            <person name="Hirai Y."/>
        </authorList>
    </citation>
    <scope>NUCLEOTIDE SEQUENCE [MRNA]</scope>
</reference>
<reference key="7">
    <citation type="journal article" date="2002" name="Genomics">
        <title>A sequence-based map of the nine genes of the human interleukin-1 cluster.</title>
        <authorList>
            <person name="Nicklin M.J.H."/>
            <person name="Barton J.L."/>
            <person name="Nguyen M."/>
            <person name="Fitzgerald M.G."/>
            <person name="Duff W.G."/>
            <person name="Kornman K."/>
        </authorList>
    </citation>
    <scope>NUCLEOTIDE SEQUENCE [GENOMIC DNA]</scope>
</reference>
<reference key="8">
    <citation type="submission" date="2003-05" db="EMBL/GenBank/DDBJ databases">
        <title>Cloning of human full-length CDSs in BD Creator(TM) system donor vector.</title>
        <authorList>
            <person name="Kalnine N."/>
            <person name="Chen X."/>
            <person name="Rolfs A."/>
            <person name="Halleck A."/>
            <person name="Hines L."/>
            <person name="Eisenstein S."/>
            <person name="Koundinya M."/>
            <person name="Raphael J."/>
            <person name="Moreira D."/>
            <person name="Kelley T."/>
            <person name="LaBaer J."/>
            <person name="Lin Y."/>
            <person name="Phelan M."/>
            <person name="Farmer A."/>
        </authorList>
    </citation>
    <scope>NUCLEOTIDE SEQUENCE [LARGE SCALE MRNA]</scope>
</reference>
<reference key="9">
    <citation type="submission" date="2004-06" db="EMBL/GenBank/DDBJ databases">
        <title>Cloning of human full open reading frames in Gateway(TM) system entry vector (pDONR201).</title>
        <authorList>
            <person name="Ebert L."/>
            <person name="Schick M."/>
            <person name="Neubert P."/>
            <person name="Schatten R."/>
            <person name="Henze S."/>
            <person name="Korn B."/>
        </authorList>
    </citation>
    <scope>NUCLEOTIDE SEQUENCE [LARGE SCALE MRNA]</scope>
</reference>
<reference key="10">
    <citation type="submission" date="2002-08" db="EMBL/GenBank/DDBJ databases">
        <authorList>
            <consortium name="SeattleSNPs variation discovery resource"/>
        </authorList>
    </citation>
    <scope>NUCLEOTIDE SEQUENCE [GENOMIC DNA]</scope>
    <scope>VARIANTS GLN-85; SER-114 AND ASN-138</scope>
</reference>
<reference key="11">
    <citation type="journal article" date="2004" name="Nat. Genet.">
        <title>Complete sequencing and characterization of 21,243 full-length human cDNAs.</title>
        <authorList>
            <person name="Ota T."/>
            <person name="Suzuki Y."/>
            <person name="Nishikawa T."/>
            <person name="Otsuki T."/>
            <person name="Sugiyama T."/>
            <person name="Irie R."/>
            <person name="Wakamatsu A."/>
            <person name="Hayashi K."/>
            <person name="Sato H."/>
            <person name="Nagai K."/>
            <person name="Kimura K."/>
            <person name="Makita H."/>
            <person name="Sekine M."/>
            <person name="Obayashi M."/>
            <person name="Nishi T."/>
            <person name="Shibahara T."/>
            <person name="Tanaka T."/>
            <person name="Ishii S."/>
            <person name="Yamamoto J."/>
            <person name="Saito K."/>
            <person name="Kawai Y."/>
            <person name="Isono Y."/>
            <person name="Nakamura Y."/>
            <person name="Nagahari K."/>
            <person name="Murakami K."/>
            <person name="Yasuda T."/>
            <person name="Iwayanagi T."/>
            <person name="Wagatsuma M."/>
            <person name="Shiratori A."/>
            <person name="Sudo H."/>
            <person name="Hosoiri T."/>
            <person name="Kaku Y."/>
            <person name="Kodaira H."/>
            <person name="Kondo H."/>
            <person name="Sugawara M."/>
            <person name="Takahashi M."/>
            <person name="Kanda K."/>
            <person name="Yokoi T."/>
            <person name="Furuya T."/>
            <person name="Kikkawa E."/>
            <person name="Omura Y."/>
            <person name="Abe K."/>
            <person name="Kamihara K."/>
            <person name="Katsuta N."/>
            <person name="Sato K."/>
            <person name="Tanikawa M."/>
            <person name="Yamazaki M."/>
            <person name="Ninomiya K."/>
            <person name="Ishibashi T."/>
            <person name="Yamashita H."/>
            <person name="Murakawa K."/>
            <person name="Fujimori K."/>
            <person name="Tanai H."/>
            <person name="Kimata M."/>
            <person name="Watanabe M."/>
            <person name="Hiraoka S."/>
            <person name="Chiba Y."/>
            <person name="Ishida S."/>
            <person name="Ono Y."/>
            <person name="Takiguchi S."/>
            <person name="Watanabe S."/>
            <person name="Yosida M."/>
            <person name="Hotuta T."/>
            <person name="Kusano J."/>
            <person name="Kanehori K."/>
            <person name="Takahashi-Fujii A."/>
            <person name="Hara H."/>
            <person name="Tanase T.-O."/>
            <person name="Nomura Y."/>
            <person name="Togiya S."/>
            <person name="Komai F."/>
            <person name="Hara R."/>
            <person name="Takeuchi K."/>
            <person name="Arita M."/>
            <person name="Imose N."/>
            <person name="Musashino K."/>
            <person name="Yuuki H."/>
            <person name="Oshima A."/>
            <person name="Sasaki N."/>
            <person name="Aotsuka S."/>
            <person name="Yoshikawa Y."/>
            <person name="Matsunawa H."/>
            <person name="Ichihara T."/>
            <person name="Shiohata N."/>
            <person name="Sano S."/>
            <person name="Moriya S."/>
            <person name="Momiyama H."/>
            <person name="Satoh N."/>
            <person name="Takami S."/>
            <person name="Terashima Y."/>
            <person name="Suzuki O."/>
            <person name="Nakagawa S."/>
            <person name="Senoh A."/>
            <person name="Mizoguchi H."/>
            <person name="Goto Y."/>
            <person name="Shimizu F."/>
            <person name="Wakebe H."/>
            <person name="Hishigaki H."/>
            <person name="Watanabe T."/>
            <person name="Sugiyama A."/>
            <person name="Takemoto M."/>
            <person name="Kawakami B."/>
            <person name="Yamazaki M."/>
            <person name="Watanabe K."/>
            <person name="Kumagai A."/>
            <person name="Itakura S."/>
            <person name="Fukuzumi Y."/>
            <person name="Fujimori Y."/>
            <person name="Komiyama M."/>
            <person name="Tashiro H."/>
            <person name="Tanigami A."/>
            <person name="Fujiwara T."/>
            <person name="Ono T."/>
            <person name="Yamada K."/>
            <person name="Fujii Y."/>
            <person name="Ozaki K."/>
            <person name="Hirao M."/>
            <person name="Ohmori Y."/>
            <person name="Kawabata A."/>
            <person name="Hikiji T."/>
            <person name="Kobatake N."/>
            <person name="Inagaki H."/>
            <person name="Ikema Y."/>
            <person name="Okamoto S."/>
            <person name="Okitani R."/>
            <person name="Kawakami T."/>
            <person name="Noguchi S."/>
            <person name="Itoh T."/>
            <person name="Shigeta K."/>
            <person name="Senba T."/>
            <person name="Matsumura K."/>
            <person name="Nakajima Y."/>
            <person name="Mizuno T."/>
            <person name="Morinaga M."/>
            <person name="Sasaki M."/>
            <person name="Togashi T."/>
            <person name="Oyama M."/>
            <person name="Hata H."/>
            <person name="Watanabe M."/>
            <person name="Komatsu T."/>
            <person name="Mizushima-Sugano J."/>
            <person name="Satoh T."/>
            <person name="Shirai Y."/>
            <person name="Takahashi Y."/>
            <person name="Nakagawa K."/>
            <person name="Okumura K."/>
            <person name="Nagase T."/>
            <person name="Nomura N."/>
            <person name="Kikuchi H."/>
            <person name="Masuho Y."/>
            <person name="Yamashita R."/>
            <person name="Nakai K."/>
            <person name="Yada T."/>
            <person name="Nakamura Y."/>
            <person name="Ohara O."/>
            <person name="Isogai T."/>
            <person name="Sugano S."/>
        </authorList>
    </citation>
    <scope>NUCLEOTIDE SEQUENCE [LARGE SCALE MRNA]</scope>
</reference>
<reference key="12">
    <citation type="journal article" date="2005" name="Nature">
        <title>Generation and annotation of the DNA sequences of human chromosomes 2 and 4.</title>
        <authorList>
            <person name="Hillier L.W."/>
            <person name="Graves T.A."/>
            <person name="Fulton R.S."/>
            <person name="Fulton L.A."/>
            <person name="Pepin K.H."/>
            <person name="Minx P."/>
            <person name="Wagner-McPherson C."/>
            <person name="Layman D."/>
            <person name="Wylie K."/>
            <person name="Sekhon M."/>
            <person name="Becker M.C."/>
            <person name="Fewell G.A."/>
            <person name="Delehaunty K.D."/>
            <person name="Miner T.L."/>
            <person name="Nash W.E."/>
            <person name="Kremitzki C."/>
            <person name="Oddy L."/>
            <person name="Du H."/>
            <person name="Sun H."/>
            <person name="Bradshaw-Cordum H."/>
            <person name="Ali J."/>
            <person name="Carter J."/>
            <person name="Cordes M."/>
            <person name="Harris A."/>
            <person name="Isak A."/>
            <person name="van Brunt A."/>
            <person name="Nguyen C."/>
            <person name="Du F."/>
            <person name="Courtney L."/>
            <person name="Kalicki J."/>
            <person name="Ozersky P."/>
            <person name="Abbott S."/>
            <person name="Armstrong J."/>
            <person name="Belter E.A."/>
            <person name="Caruso L."/>
            <person name="Cedroni M."/>
            <person name="Cotton M."/>
            <person name="Davidson T."/>
            <person name="Desai A."/>
            <person name="Elliott G."/>
            <person name="Erb T."/>
            <person name="Fronick C."/>
            <person name="Gaige T."/>
            <person name="Haakenson W."/>
            <person name="Haglund K."/>
            <person name="Holmes A."/>
            <person name="Harkins R."/>
            <person name="Kim K."/>
            <person name="Kruchowski S.S."/>
            <person name="Strong C.M."/>
            <person name="Grewal N."/>
            <person name="Goyea E."/>
            <person name="Hou S."/>
            <person name="Levy A."/>
            <person name="Martinka S."/>
            <person name="Mead K."/>
            <person name="McLellan M.D."/>
            <person name="Meyer R."/>
            <person name="Randall-Maher J."/>
            <person name="Tomlinson C."/>
            <person name="Dauphin-Kohlberg S."/>
            <person name="Kozlowicz-Reilly A."/>
            <person name="Shah N."/>
            <person name="Swearengen-Shahid S."/>
            <person name="Snider J."/>
            <person name="Strong J.T."/>
            <person name="Thompson J."/>
            <person name="Yoakum M."/>
            <person name="Leonard S."/>
            <person name="Pearman C."/>
            <person name="Trani L."/>
            <person name="Radionenko M."/>
            <person name="Waligorski J.E."/>
            <person name="Wang C."/>
            <person name="Rock S.M."/>
            <person name="Tin-Wollam A.-M."/>
            <person name="Maupin R."/>
            <person name="Latreille P."/>
            <person name="Wendl M.C."/>
            <person name="Yang S.-P."/>
            <person name="Pohl C."/>
            <person name="Wallis J.W."/>
            <person name="Spieth J."/>
            <person name="Bieri T.A."/>
            <person name="Berkowicz N."/>
            <person name="Nelson J.O."/>
            <person name="Osborne J."/>
            <person name="Ding L."/>
            <person name="Meyer R."/>
            <person name="Sabo A."/>
            <person name="Shotland Y."/>
            <person name="Sinha P."/>
            <person name="Wohldmann P.E."/>
            <person name="Cook L.L."/>
            <person name="Hickenbotham M.T."/>
            <person name="Eldred J."/>
            <person name="Williams D."/>
            <person name="Jones T.A."/>
            <person name="She X."/>
            <person name="Ciccarelli F.D."/>
            <person name="Izaurralde E."/>
            <person name="Taylor J."/>
            <person name="Schmutz J."/>
            <person name="Myers R.M."/>
            <person name="Cox D.R."/>
            <person name="Huang X."/>
            <person name="McPherson J.D."/>
            <person name="Mardis E.R."/>
            <person name="Clifton S.W."/>
            <person name="Warren W.C."/>
            <person name="Chinwalla A.T."/>
            <person name="Eddy S.R."/>
            <person name="Marra M.A."/>
            <person name="Ovcharenko I."/>
            <person name="Furey T.S."/>
            <person name="Miller W."/>
            <person name="Eichler E.E."/>
            <person name="Bork P."/>
            <person name="Suyama M."/>
            <person name="Torrents D."/>
            <person name="Waterston R.H."/>
            <person name="Wilson R.K."/>
        </authorList>
    </citation>
    <scope>NUCLEOTIDE SEQUENCE [LARGE SCALE GENOMIC DNA]</scope>
</reference>
<reference key="13">
    <citation type="submission" date="2005-07" db="EMBL/GenBank/DDBJ databases">
        <authorList>
            <person name="Mural R.J."/>
            <person name="Istrail S."/>
            <person name="Sutton G."/>
            <person name="Florea L."/>
            <person name="Halpern A.L."/>
            <person name="Mobarry C.M."/>
            <person name="Lippert R."/>
            <person name="Walenz B."/>
            <person name="Shatkay H."/>
            <person name="Dew I."/>
            <person name="Miller J.R."/>
            <person name="Flanigan M.J."/>
            <person name="Edwards N.J."/>
            <person name="Bolanos R."/>
            <person name="Fasulo D."/>
            <person name="Halldorsson B.V."/>
            <person name="Hannenhalli S."/>
            <person name="Turner R."/>
            <person name="Yooseph S."/>
            <person name="Lu F."/>
            <person name="Nusskern D.R."/>
            <person name="Shue B.C."/>
            <person name="Zheng X.H."/>
            <person name="Zhong F."/>
            <person name="Delcher A.L."/>
            <person name="Huson D.H."/>
            <person name="Kravitz S.A."/>
            <person name="Mouchard L."/>
            <person name="Reinert K."/>
            <person name="Remington K.A."/>
            <person name="Clark A.G."/>
            <person name="Waterman M.S."/>
            <person name="Eichler E.E."/>
            <person name="Adams M.D."/>
            <person name="Hunkapiller M.W."/>
            <person name="Myers E.W."/>
            <person name="Venter J.C."/>
        </authorList>
    </citation>
    <scope>NUCLEOTIDE SEQUENCE [LARGE SCALE GENOMIC DNA]</scope>
</reference>
<reference key="14">
    <citation type="journal article" date="2004" name="Genome Res.">
        <title>The status, quality, and expansion of the NIH full-length cDNA project: the Mammalian Gene Collection (MGC).</title>
        <authorList>
            <consortium name="The MGC Project Team"/>
        </authorList>
    </citation>
    <scope>NUCLEOTIDE SEQUENCE [LARGE SCALE MRNA]</scope>
    <source>
        <tissue>Lung</tissue>
    </source>
</reference>
<reference key="15">
    <citation type="journal article" date="1988" name="Blood">
        <title>Effects of hematopoietin-1 and interleukin 1 activities on early hematopoietic cells of the bone marrow.</title>
        <authorList>
            <person name="Zsebo K.M."/>
            <person name="Wypych J."/>
            <person name="Yuschenkoff V.N."/>
            <person name="Lu H."/>
            <person name="Hunt P."/>
            <person name="Dukes P.P."/>
            <person name="Langley K.E."/>
        </authorList>
    </citation>
    <scope>PROTEIN SEQUENCE OF 113-132</scope>
</reference>
<reference key="16">
    <citation type="journal article" date="1987" name="J. Biol. Chem.">
        <title>The interleukin-1 receptor binds the human interleukin-1 alpha precursor but not the interleukin-1 beta precursor.</title>
        <authorList>
            <person name="Mosley B."/>
            <person name="Urdal D.L."/>
            <person name="Prickett K.S."/>
            <person name="Larsen A."/>
            <person name="Cosman D."/>
            <person name="Conlon P.J."/>
            <person name="Gillis S."/>
            <person name="Dower S.K."/>
        </authorList>
    </citation>
    <scope>FUNCTION</scope>
    <scope>INTERACTION WITH IL1R1</scope>
</reference>
<reference key="17">
    <citation type="journal article" date="1988" name="J. Immunol.">
        <title>Phosphorylation of intracellular precursors of human IL-1.</title>
        <authorList>
            <person name="Kobayashi Y."/>
            <person name="Appella E."/>
            <person name="Yamada M."/>
            <person name="Copeland T.D."/>
            <person name="Oppenheim J.J."/>
            <person name="Matsushima K."/>
        </authorList>
    </citation>
    <scope>FUNCTION</scope>
    <scope>PHOSPHORYLATION</scope>
</reference>
<reference key="18">
    <citation type="journal article" date="1990" name="Proc. Natl. Acad. Sci. U.S.A.">
        <title>Identification of calcium-activated neutral protease as a processing enzyme of human interleukin 1 alpha.</title>
        <authorList>
            <person name="Kobayashi Y."/>
            <person name="Yamamoto K."/>
            <person name="Saido T."/>
            <person name="Kawasaki H."/>
            <person name="Oppenheim J.J."/>
            <person name="Matsushima K."/>
        </authorList>
    </citation>
    <scope>CLEAVAGE BY CAPN1</scope>
</reference>
<reference key="19">
    <citation type="journal article" date="1993" name="Proc. Natl. Acad. Sci. U.S.A.">
        <title>The 31-kDa precursor of interleukin 1 alpha is myristoylated on specific lysines within the 16-kDa N-terminal propiece.</title>
        <authorList>
            <person name="Stevenson F.T."/>
            <person name="Bursten S.L."/>
            <person name="Fanton C."/>
            <person name="Locksley R.M."/>
            <person name="Lovett D.H."/>
        </authorList>
    </citation>
    <scope>MYRISTOYLATION AT LYS-82 AND LYS-83</scope>
</reference>
<reference key="20">
    <citation type="journal article" date="2004" name="Cytokine">
        <title>Involvement of p38 and p42/44 MAP kinases and protein kinase C in the interferon-gamma and interleukin-1alpha-induced phosphorylation of 85-kDa cytosolic phospholipase A(2) in primary human bronchial epithelial cells.</title>
        <authorList>
            <person name="Wu T."/>
            <person name="Han C."/>
            <person name="Shelhamer J.H."/>
        </authorList>
    </citation>
    <scope>FUNCTION</scope>
</reference>
<reference key="21">
    <citation type="journal article" date="2005" name="Exp. Dermatol.">
        <title>Induction of cytokine (interleukin-1alpha and tumor necrosis factor-alpha) and chemokine (CCL20, CCL27, and CXCL8) alarm signals after allergen and irritant exposure.</title>
        <authorList>
            <person name="Spiekstra S.W."/>
            <person name="Toebak M.J."/>
            <person name="Sampat-Sardjoepersad S."/>
            <person name="van Beek P.J."/>
            <person name="Boorsma D.M."/>
            <person name="Stoof T.J."/>
            <person name="von Blomberg B.M."/>
            <person name="Scheper R.J."/>
            <person name="Bruynzeel D.P."/>
            <person name="Rustemeyer T."/>
            <person name="Gibbs S."/>
        </authorList>
    </citation>
    <scope>FUNCTION AS ALARMIN</scope>
</reference>
<reference key="22">
    <citation type="journal article" date="2007" name="Mol. Cell. Proteomics">
        <title>Mass spectrometric analysis of the endogenous type I interleukin-1 (IL-1) receptor signaling complex formed after IL-1 binding identifies IL-1RAcP, MyD88, and IRAK-4 as the stable components.</title>
        <authorList>
            <person name="Brikos C."/>
            <person name="Wait R."/>
            <person name="Begum S."/>
            <person name="O'Neill L.A."/>
            <person name="Saklatvala J."/>
        </authorList>
    </citation>
    <scope>FUNCTION</scope>
</reference>
<reference key="23">
    <citation type="journal article" date="2015" name="Sci. Rep.">
        <title>IL-1alpha is a DNA damage sensor linking genotoxic stress signaling to sterile inflammation and innate immunity.</title>
        <authorList>
            <person name="Cohen I."/>
            <person name="Idan C."/>
            <person name="Rider P."/>
            <person name="Peleg R."/>
            <person name="Vornov E."/>
            <person name="Elena V."/>
            <person name="Tomas M."/>
            <person name="Martin T."/>
            <person name="Tudor C."/>
            <person name="Cicerone T."/>
            <person name="Wegner M."/>
            <person name="Mareike W."/>
            <person name="Brondani L."/>
            <person name="Lydia B."/>
            <person name="Freudenberg M."/>
            <person name="Marina F."/>
            <person name="Mittler G."/>
            <person name="Gerhard M."/>
            <person name="Ferrando-May E."/>
            <person name="Elisa F.M."/>
            <person name="Dinarello C.A."/>
            <person name="Apte R.N."/>
            <person name="Ron A.N."/>
            <person name="Schneider R."/>
            <person name="Robert S."/>
        </authorList>
    </citation>
    <scope>FUNCTION</scope>
    <scope>SUBCELLULAR LOCATION</scope>
    <scope>ACETYLATION AT LYS-82</scope>
    <scope>MUTAGENESIS OF LYS-82</scope>
    <scope>NUCLEAR LOCALIZATION SIGNAL</scope>
</reference>
<reference key="24">
    <citation type="journal article" date="2020" name="Cell">
        <title>A Translocation Pathway for Vesicle-Mediated Unconventional Protein Secretion.</title>
        <authorList>
            <person name="Zhang M."/>
            <person name="Liu L."/>
            <person name="Lin X."/>
            <person name="Wang Y."/>
            <person name="Li Y."/>
            <person name="Guo Q."/>
            <person name="Li S."/>
            <person name="Sun Y."/>
            <person name="Tao X."/>
            <person name="Zhang D."/>
            <person name="Lv X."/>
            <person name="Zheng L."/>
            <person name="Ge L."/>
        </authorList>
    </citation>
    <scope>SUBCELLULAR LOCATION</scope>
    <scope>INTERACTION WITH TMED10</scope>
</reference>
<reference key="25">
    <citation type="journal article" date="1990" name="Biochemistry">
        <title>Structure of interleukin 1 alpha at 2.7-A resolution.</title>
        <authorList>
            <person name="Graves B.J."/>
            <person name="Hatada M.H."/>
            <person name="Hendrickson W.A."/>
            <person name="Miller J.K."/>
            <person name="Madison V.S."/>
            <person name="Satow Y."/>
        </authorList>
    </citation>
    <scope>X-RAY CRYSTALLOGRAPHY (2.7 ANGSTROMS)</scope>
</reference>
<reference evidence="18" key="26">
    <citation type="journal article" date="2011" name="J. Biol. Chem.">
        <title>The IL1alpha-S100A13 heterotetrameric complex structure: a component in the non-classical pathway for interleukin 1alpha secretion.</title>
        <authorList>
            <person name="Mohan S.K."/>
            <person name="Yu C."/>
        </authorList>
    </citation>
    <scope>STRUCTURE BY NMR OF 121-271</scope>
    <scope>INTERACTION WITH S100A13</scope>
</reference>
<comment type="function">
    <text evidence="3 4 5 9 10 13">Cytokine constitutively present intracellularly in nearly all resting non-hematopoietic cells that plays an important role in inflammation and bridges the innate and adaptive immune systems (PubMed:26439902). After binding to its receptor IL1R1 together with its accessory protein IL1RAP, forms the high affinity interleukin-1 receptor complex (PubMed:17507369, PubMed:2950091). Signaling involves the recruitment of adapter molecules such as MYD88, IRAK1 or IRAK4 (PubMed:17507369). In turn, mediates the activation of NF-kappa-B and the three MAPK pathways p38, p42/p44 and JNK pathways (PubMed:14687581). Within the cell, acts as an alarmin and cell death results in its liberation in the extracellular space after disruption of the cell membrane to induce inflammation and alert the host to injury or damage (PubMed:15679580). In addition to its role as a danger signal, which occurs when the cytokine is passively released by cell necrosis, directly senses DNA damage and acts as a signal for genotoxic stress without loss of cell integrity (PubMed:26439902).</text>
</comment>
<comment type="subunit">
    <text evidence="7 10 12">Monomer. Interacts with TMED10; the interaction mediates the translocation from the cytoplasm into the ERGIC (endoplasmic reticulum-Golgi intermediate compartment) and thereby secretion (PubMed:32272059). Interacts with IL1R1 (PubMed:2950091). Interacts with S100A13; this interaction is the first step in the export of IL1A, followed by direct translocation of this complex across the plasma membrane (PubMed:21270123).</text>
</comment>
<comment type="interaction">
    <interactant intactId="EBI-1749782">
        <id>P01583</id>
    </interactant>
    <interactant intactId="EBI-516667">
        <id>P29466</id>
        <label>CASP1</label>
    </interactant>
    <organismsDiffer>false</organismsDiffer>
    <experiments>3</experiments>
</comment>
<comment type="interaction">
    <interactant intactId="EBI-1749782">
        <id>P01583</id>
    </interactant>
    <interactant intactId="EBI-1749839">
        <id>PRO_0000004522</id>
        <label>CASP1</label>
        <dbReference type="UniProtKB" id="P29466"/>
    </interactant>
    <organismsDiffer>false</organismsDiffer>
    <experiments>4</experiments>
</comment>
<comment type="interaction">
    <interactant intactId="EBI-1749782">
        <id>P01583</id>
    </interactant>
    <interactant intactId="EBI-357001">
        <id>O00165</id>
        <label>HAX1</label>
    </interactant>
    <organismsDiffer>false</organismsDiffer>
    <experiments>3</experiments>
</comment>
<comment type="interaction">
    <interactant intactId="EBI-1749782">
        <id>P01583</id>
    </interactant>
    <interactant intactId="EBI-2831568">
        <id>P27930</id>
        <label>IL1R2</label>
    </interactant>
    <organismsDiffer>false</organismsDiffer>
    <experiments>4</experiments>
</comment>
<comment type="interaction">
    <interactant intactId="EBI-1749782">
        <id>P01583</id>
    </interactant>
    <interactant intactId="EBI-359923">
        <id>O60684</id>
        <label>KPNA6</label>
    </interactant>
    <organismsDiffer>false</organismsDiffer>
    <experiments>3</experiments>
</comment>
<comment type="interaction">
    <interactant intactId="EBI-1749782">
        <id>P01583</id>
    </interactant>
    <interactant intactId="EBI-748397">
        <id>P50222</id>
        <label>MEOX2</label>
    </interactant>
    <organismsDiffer>false</organismsDiffer>
    <experiments>3</experiments>
</comment>
<comment type="subcellular location">
    <subcellularLocation>
        <location evidence="9">Nucleus</location>
    </subcellularLocation>
    <subcellularLocation>
        <location evidence="12">Cytoplasm</location>
    </subcellularLocation>
    <subcellularLocation>
        <location evidence="9">Secreted</location>
    </subcellularLocation>
    <text evidence="12">The lack of a specific hydrophobic segment in the precursor sequence suggests that IL-1 is released by damaged cells or is secreted by a mechanism differing from that used for other secretory proteins. The secretion is dependent on protein unfolding and facilitated by the cargo receptor TMED10; it results in protein translocation from the cytoplasm into the ERGIC (endoplasmic reticulum-Golgi intermediate compartment) followed by vesicle entry and secretion (PubMed:32272059). Recruited to DNA damage sites and secreted after genotoxic stress.</text>
</comment>
<comment type="domain">
    <text>The similarity among the IL-1 precursors suggests that the amino ends of these proteins serve some as yet undefined function.</text>
</comment>
<comment type="PTM">
    <text evidence="9">Acetylated within its nuclear localization sequence, which impacts subcellular localization.</text>
</comment>
<comment type="PTM">
    <text evidence="6">Proteolytic processed by CAPN1 in a calcium-dependent manner. Cleavage from 31 kDa precursor to 18 kDa biologically active molecules.</text>
</comment>
<comment type="PTM">
    <text evidence="13">Phosphorylated. Phosphorylation greatly enhances susceptibility to digestion and promotes the conversion of pre-IL1A alpha to the biologically active IL1A.</text>
</comment>
<comment type="similarity">
    <text evidence="17">Belongs to the IL-1 family.</text>
</comment>
<comment type="online information" name="Wikipedia">
    <link uri="https://en.wikipedia.org/wiki/Interleukin_1"/>
    <text>Interleukin-1 entry</text>
</comment>
<protein>
    <recommendedName>
        <fullName>Interleukin-1 alpha</fullName>
        <shortName>IL-1 alpha</shortName>
    </recommendedName>
    <alternativeName>
        <fullName>Hematopoietin-1</fullName>
    </alternativeName>
</protein>
<dbReference type="EMBL" id="X02531">
    <property type="protein sequence ID" value="CAA26371.1"/>
    <property type="molecule type" value="mRNA"/>
</dbReference>
<dbReference type="EMBL" id="X03833">
    <property type="protein sequence ID" value="CAA27448.1"/>
    <property type="molecule type" value="Genomic_DNA"/>
</dbReference>
<dbReference type="EMBL" id="X02851">
    <property type="protein sequence ID" value="CAA26604.1"/>
    <property type="molecule type" value="mRNA"/>
</dbReference>
<dbReference type="EMBL" id="X56086">
    <property type="protein sequence ID" value="CAA39566.1"/>
    <property type="molecule type" value="mRNA"/>
</dbReference>
<dbReference type="EMBL" id="M28983">
    <property type="protein sequence ID" value="AAA59134.1"/>
    <property type="molecule type" value="mRNA"/>
</dbReference>
<dbReference type="EMBL" id="M15329">
    <property type="protein sequence ID" value="AAA59133.1"/>
    <property type="molecule type" value="mRNA"/>
</dbReference>
<dbReference type="EMBL" id="BN000002">
    <property type="protein sequence ID" value="CAD29871.1"/>
    <property type="molecule type" value="Genomic_DNA"/>
</dbReference>
<dbReference type="EMBL" id="BT007014">
    <property type="protein sequence ID" value="AAP35660.1"/>
    <property type="molecule type" value="mRNA"/>
</dbReference>
<dbReference type="EMBL" id="CR457414">
    <property type="protein sequence ID" value="CAG33695.1"/>
    <property type="molecule type" value="mRNA"/>
</dbReference>
<dbReference type="EMBL" id="AF536338">
    <property type="protein sequence ID" value="AAM96189.1"/>
    <property type="molecule type" value="Genomic_DNA"/>
</dbReference>
<dbReference type="EMBL" id="AK314850">
    <property type="protein sequence ID" value="BAG37367.1"/>
    <property type="molecule type" value="mRNA"/>
</dbReference>
<dbReference type="EMBL" id="AC112235">
    <property type="protein sequence ID" value="AAX93054.1"/>
    <property type="molecule type" value="Genomic_DNA"/>
</dbReference>
<dbReference type="EMBL" id="CH471217">
    <property type="protein sequence ID" value="EAW73604.1"/>
    <property type="molecule type" value="Genomic_DNA"/>
</dbReference>
<dbReference type="EMBL" id="BC013142">
    <property type="protein sequence ID" value="AAH13142.1"/>
    <property type="molecule type" value="mRNA"/>
</dbReference>
<dbReference type="CCDS" id="CCDS2101.1"/>
<dbReference type="PIR" id="A23385">
    <property type="entry name" value="ICHU1A"/>
</dbReference>
<dbReference type="RefSeq" id="NP_000566.3">
    <property type="nucleotide sequence ID" value="NM_000575.4"/>
</dbReference>
<dbReference type="RefSeq" id="NP_001358483.1">
    <property type="nucleotide sequence ID" value="NM_001371554.1"/>
</dbReference>
<dbReference type="PDB" id="2ILA">
    <property type="method" value="X-ray"/>
    <property type="resolution" value="2.30 A"/>
    <property type="chains" value="A=117-271"/>
</dbReference>
<dbReference type="PDB" id="2KKI">
    <property type="method" value="NMR"/>
    <property type="chains" value="A=121-271"/>
</dbReference>
<dbReference type="PDB" id="2L5X">
    <property type="method" value="NMR"/>
    <property type="chains" value="A/D=121-271"/>
</dbReference>
<dbReference type="PDB" id="5UC6">
    <property type="method" value="X-ray"/>
    <property type="resolution" value="2.10 A"/>
    <property type="chains" value="A=113-271"/>
</dbReference>
<dbReference type="PDBsum" id="2ILA"/>
<dbReference type="PDBsum" id="2KKI"/>
<dbReference type="PDBsum" id="2L5X"/>
<dbReference type="PDBsum" id="5UC6"/>
<dbReference type="SMR" id="P01583"/>
<dbReference type="BioGRID" id="109768">
    <property type="interactions" value="81"/>
</dbReference>
<dbReference type="ComplexPortal" id="CPX-8830">
    <property type="entry name" value="Interleukin-1 alpha-soluble receptor type 1 complex"/>
</dbReference>
<dbReference type="ComplexPortal" id="CPX-9166">
    <property type="entry name" value="Precursor interleukin-1 alpha-soluble receptor type 1 complex"/>
</dbReference>
<dbReference type="ComplexPortal" id="CPX-9168">
    <property type="entry name" value="Interleukin-1 alpha decoy receptor-ligand type 2 complex"/>
</dbReference>
<dbReference type="ComplexPortal" id="CPX-9169">
    <property type="entry name" value="Precursor interleukin-1 alpha-membrane-bound receptor type 1 complex"/>
</dbReference>
<dbReference type="ComplexPortal" id="CPX-9173">
    <property type="entry name" value="Interleukin-1 alpha-membrane-bound receptor type 1 complex"/>
</dbReference>
<dbReference type="DIP" id="DIP-40550N"/>
<dbReference type="FunCoup" id="P01583">
    <property type="interactions" value="662"/>
</dbReference>
<dbReference type="IntAct" id="P01583">
    <property type="interactions" value="9"/>
</dbReference>
<dbReference type="STRING" id="9606.ENSP00000263339"/>
<dbReference type="ChEMBL" id="CHEMBL3580496"/>
<dbReference type="DrugBank" id="DB06372">
    <property type="generic name" value="Rilonacept"/>
</dbReference>
<dbReference type="DrugCentral" id="P01583"/>
<dbReference type="MoonProt" id="P01583"/>
<dbReference type="TCDB" id="1.A.109.1.1">
    <property type="family name" value="the interleukin 1 (il1) family"/>
</dbReference>
<dbReference type="GlyCosmos" id="P01583">
    <property type="glycosylation" value="2 sites, No reported glycans"/>
</dbReference>
<dbReference type="GlyGen" id="P01583">
    <property type="glycosylation" value="3 sites"/>
</dbReference>
<dbReference type="iPTMnet" id="P01583"/>
<dbReference type="PhosphoSitePlus" id="P01583"/>
<dbReference type="SwissPalm" id="P01583"/>
<dbReference type="BioMuta" id="IL1A"/>
<dbReference type="DMDM" id="124297"/>
<dbReference type="MassIVE" id="P01583"/>
<dbReference type="PaxDb" id="9606-ENSP00000263339"/>
<dbReference type="PeptideAtlas" id="P01583"/>
<dbReference type="ProteomicsDB" id="51390"/>
<dbReference type="ABCD" id="P01583">
    <property type="antibodies" value="1 sequenced antibody"/>
</dbReference>
<dbReference type="Antibodypedia" id="3842">
    <property type="antibodies" value="1589 antibodies from 50 providers"/>
</dbReference>
<dbReference type="CPTC" id="P01583">
    <property type="antibodies" value="3 antibodies"/>
</dbReference>
<dbReference type="DNASU" id="3552"/>
<dbReference type="Ensembl" id="ENST00000263339.4">
    <property type="protein sequence ID" value="ENSP00000263339.3"/>
    <property type="gene ID" value="ENSG00000115008.6"/>
</dbReference>
<dbReference type="GeneID" id="3552"/>
<dbReference type="KEGG" id="hsa:3552"/>
<dbReference type="MANE-Select" id="ENST00000263339.4">
    <property type="protein sequence ID" value="ENSP00000263339.3"/>
    <property type="RefSeq nucleotide sequence ID" value="NM_000575.5"/>
    <property type="RefSeq protein sequence ID" value="NP_000566.3"/>
</dbReference>
<dbReference type="UCSC" id="uc002tig.4">
    <property type="organism name" value="human"/>
</dbReference>
<dbReference type="AGR" id="HGNC:5991"/>
<dbReference type="CTD" id="3552"/>
<dbReference type="DisGeNET" id="3552"/>
<dbReference type="GeneCards" id="IL1A"/>
<dbReference type="HGNC" id="HGNC:5991">
    <property type="gene designation" value="IL1A"/>
</dbReference>
<dbReference type="HPA" id="ENSG00000115008">
    <property type="expression patterns" value="Tissue enhanced (esophagus, testis, urinary bladder)"/>
</dbReference>
<dbReference type="MIM" id="147760">
    <property type="type" value="gene"/>
</dbReference>
<dbReference type="neXtProt" id="NX_P01583"/>
<dbReference type="OpenTargets" id="ENSG00000115008"/>
<dbReference type="PharmGKB" id="PA29807"/>
<dbReference type="VEuPathDB" id="HostDB:ENSG00000115008"/>
<dbReference type="eggNOG" id="ENOG502T3DD">
    <property type="taxonomic scope" value="Eukaryota"/>
</dbReference>
<dbReference type="GeneTree" id="ENSGT00390000013353"/>
<dbReference type="HOGENOM" id="CLU_090014_0_0_1"/>
<dbReference type="InParanoid" id="P01583"/>
<dbReference type="OMA" id="SNMKYNF"/>
<dbReference type="OrthoDB" id="9451248at2759"/>
<dbReference type="PAN-GO" id="P01583">
    <property type="GO annotations" value="8 GO annotations based on evolutionary models"/>
</dbReference>
<dbReference type="PhylomeDB" id="P01583"/>
<dbReference type="TreeFam" id="TF300203"/>
<dbReference type="PathwayCommons" id="P01583"/>
<dbReference type="Reactome" id="R-HSA-2559582">
    <property type="pathway name" value="Senescence-Associated Secretory Phenotype (SASP)"/>
</dbReference>
<dbReference type="Reactome" id="R-HSA-448706">
    <property type="pathway name" value="Interleukin-1 processing"/>
</dbReference>
<dbReference type="Reactome" id="R-HSA-5620971">
    <property type="pathway name" value="Pyroptosis"/>
</dbReference>
<dbReference type="Reactome" id="R-HSA-6783783">
    <property type="pathway name" value="Interleukin-10 signaling"/>
</dbReference>
<dbReference type="Reactome" id="R-HSA-6785807">
    <property type="pathway name" value="Interleukin-4 and Interleukin-13 signaling"/>
</dbReference>
<dbReference type="Reactome" id="R-HSA-9020702">
    <property type="pathway name" value="Interleukin-1 signaling"/>
</dbReference>
<dbReference type="Reactome" id="R-HSA-9660826">
    <property type="pathway name" value="Purinergic signaling in leishmaniasis infection"/>
</dbReference>
<dbReference type="SignaLink" id="P01583"/>
<dbReference type="SIGNOR" id="P01583"/>
<dbReference type="BioGRID-ORCS" id="3552">
    <property type="hits" value="14 hits in 1152 CRISPR screens"/>
</dbReference>
<dbReference type="ChiTaRS" id="IL1A">
    <property type="organism name" value="human"/>
</dbReference>
<dbReference type="EvolutionaryTrace" id="P01583"/>
<dbReference type="GeneWiki" id="IL1A"/>
<dbReference type="GenomeRNAi" id="3552"/>
<dbReference type="Pharos" id="P01583">
    <property type="development level" value="Tchem"/>
</dbReference>
<dbReference type="PRO" id="PR:P01583"/>
<dbReference type="Proteomes" id="UP000005640">
    <property type="component" value="Chromosome 2"/>
</dbReference>
<dbReference type="RNAct" id="P01583">
    <property type="molecule type" value="protein"/>
</dbReference>
<dbReference type="Bgee" id="ENSG00000115008">
    <property type="expression patterns" value="Expressed in periodontal ligament and 112 other cell types or tissues"/>
</dbReference>
<dbReference type="GO" id="GO:0005829">
    <property type="term" value="C:cytosol"/>
    <property type="evidence" value="ECO:0000314"/>
    <property type="project" value="UniProtKB"/>
</dbReference>
<dbReference type="GO" id="GO:0005576">
    <property type="term" value="C:extracellular region"/>
    <property type="evidence" value="ECO:0000304"/>
    <property type="project" value="Reactome"/>
</dbReference>
<dbReference type="GO" id="GO:0005615">
    <property type="term" value="C:extracellular space"/>
    <property type="evidence" value="ECO:0000314"/>
    <property type="project" value="UniProtKB"/>
</dbReference>
<dbReference type="GO" id="GO:0005634">
    <property type="term" value="C:nucleus"/>
    <property type="evidence" value="ECO:0007669"/>
    <property type="project" value="UniProtKB-SubCell"/>
</dbReference>
<dbReference type="GO" id="GO:0005507">
    <property type="term" value="F:copper ion binding"/>
    <property type="evidence" value="ECO:0000314"/>
    <property type="project" value="UniProtKB"/>
</dbReference>
<dbReference type="GO" id="GO:0005125">
    <property type="term" value="F:cytokine activity"/>
    <property type="evidence" value="ECO:0000315"/>
    <property type="project" value="BHF-UCL"/>
</dbReference>
<dbReference type="GO" id="GO:0005149">
    <property type="term" value="F:interleukin-1 receptor binding"/>
    <property type="evidence" value="ECO:0007669"/>
    <property type="project" value="InterPro"/>
</dbReference>
<dbReference type="GO" id="GO:0006915">
    <property type="term" value="P:apoptotic process"/>
    <property type="evidence" value="ECO:0000304"/>
    <property type="project" value="ProtInc"/>
</dbReference>
<dbReference type="GO" id="GO:0034605">
    <property type="term" value="P:cellular response to heat"/>
    <property type="evidence" value="ECO:0000314"/>
    <property type="project" value="UniProtKB"/>
</dbReference>
<dbReference type="GO" id="GO:0071222">
    <property type="term" value="P:cellular response to lipopolysaccharide"/>
    <property type="evidence" value="ECO:0000318"/>
    <property type="project" value="GO_Central"/>
</dbReference>
<dbReference type="GO" id="GO:0002248">
    <property type="term" value="P:connective tissue replacement involved in inflammatory response wound healing"/>
    <property type="evidence" value="ECO:0007669"/>
    <property type="project" value="Ensembl"/>
</dbReference>
<dbReference type="GO" id="GO:0019221">
    <property type="term" value="P:cytokine-mediated signaling pathway"/>
    <property type="evidence" value="ECO:0000315"/>
    <property type="project" value="BHF-UCL"/>
</dbReference>
<dbReference type="GO" id="GO:0035234">
    <property type="term" value="P:ectopic germ cell programmed cell death"/>
    <property type="evidence" value="ECO:0007669"/>
    <property type="project" value="Ensembl"/>
</dbReference>
<dbReference type="GO" id="GO:0097192">
    <property type="term" value="P:extrinsic apoptotic signaling pathway in absence of ligand"/>
    <property type="evidence" value="ECO:0007669"/>
    <property type="project" value="Ensembl"/>
</dbReference>
<dbReference type="GO" id="GO:0001660">
    <property type="term" value="P:fever generation"/>
    <property type="evidence" value="ECO:0007669"/>
    <property type="project" value="UniProtKB-KW"/>
</dbReference>
<dbReference type="GO" id="GO:0006955">
    <property type="term" value="P:immune response"/>
    <property type="evidence" value="ECO:0000318"/>
    <property type="project" value="GO_Central"/>
</dbReference>
<dbReference type="GO" id="GO:0006954">
    <property type="term" value="P:inflammatory response"/>
    <property type="evidence" value="ECO:0000318"/>
    <property type="project" value="GO_Central"/>
</dbReference>
<dbReference type="GO" id="GO:0006883">
    <property type="term" value="P:intracellular sodium ion homeostasis"/>
    <property type="evidence" value="ECO:0007669"/>
    <property type="project" value="Ensembl"/>
</dbReference>
<dbReference type="GO" id="GO:0008285">
    <property type="term" value="P:negative regulation of cell population proliferation"/>
    <property type="evidence" value="ECO:0000314"/>
    <property type="project" value="BHF-UCL"/>
</dbReference>
<dbReference type="GO" id="GO:2001240">
    <property type="term" value="P:negative regulation of extrinsic apoptotic signaling pathway in absence of ligand"/>
    <property type="evidence" value="ECO:0000304"/>
    <property type="project" value="BHF-UCL"/>
</dbReference>
<dbReference type="GO" id="GO:0045766">
    <property type="term" value="P:positive regulation of angiogenesis"/>
    <property type="evidence" value="ECO:0000250"/>
    <property type="project" value="BHF-UCL"/>
</dbReference>
<dbReference type="GO" id="GO:0043123">
    <property type="term" value="P:positive regulation of canonical NF-kappaB signal transduction"/>
    <property type="evidence" value="ECO:0000318"/>
    <property type="project" value="GO_Central"/>
</dbReference>
<dbReference type="GO" id="GO:0051781">
    <property type="term" value="P:positive regulation of cell division"/>
    <property type="evidence" value="ECO:0007669"/>
    <property type="project" value="UniProtKB-KW"/>
</dbReference>
<dbReference type="GO" id="GO:0001819">
    <property type="term" value="P:positive regulation of cytokine production"/>
    <property type="evidence" value="ECO:0000314"/>
    <property type="project" value="BHF-UCL"/>
</dbReference>
<dbReference type="GO" id="GO:0010628">
    <property type="term" value="P:positive regulation of gene expression"/>
    <property type="evidence" value="ECO:0000314"/>
    <property type="project" value="UniProtKB"/>
</dbReference>
<dbReference type="GO" id="GO:0033092">
    <property type="term" value="P:positive regulation of immature T cell proliferation in thymus"/>
    <property type="evidence" value="ECO:0000318"/>
    <property type="project" value="GO_Central"/>
</dbReference>
<dbReference type="GO" id="GO:0032743">
    <property type="term" value="P:positive regulation of interleukin-2 production"/>
    <property type="evidence" value="ECO:0000315"/>
    <property type="project" value="BHF-UCL"/>
</dbReference>
<dbReference type="GO" id="GO:0032755">
    <property type="term" value="P:positive regulation of interleukin-6 production"/>
    <property type="evidence" value="ECO:0000250"/>
    <property type="project" value="ARUK-UCL"/>
</dbReference>
<dbReference type="GO" id="GO:0045840">
    <property type="term" value="P:positive regulation of mitotic nuclear division"/>
    <property type="evidence" value="ECO:0000315"/>
    <property type="project" value="BHF-UCL"/>
</dbReference>
<dbReference type="GO" id="GO:0050714">
    <property type="term" value="P:positive regulation of protein secretion"/>
    <property type="evidence" value="ECO:0000315"/>
    <property type="project" value="AgBase"/>
</dbReference>
<dbReference type="GO" id="GO:0045944">
    <property type="term" value="P:positive regulation of transcription by RNA polymerase II"/>
    <property type="evidence" value="ECO:0007669"/>
    <property type="project" value="Ensembl"/>
</dbReference>
<dbReference type="GO" id="GO:0032760">
    <property type="term" value="P:positive regulation of tumor necrosis factor production"/>
    <property type="evidence" value="ECO:0000250"/>
    <property type="project" value="ARUK-UCL"/>
</dbReference>
<dbReference type="GO" id="GO:0010575">
    <property type="term" value="P:positive regulation of vascular endothelial growth factor production"/>
    <property type="evidence" value="ECO:0000250"/>
    <property type="project" value="BHF-UCL"/>
</dbReference>
<dbReference type="GO" id="GO:0070372">
    <property type="term" value="P:regulation of ERK1 and ERK2 cascade"/>
    <property type="evidence" value="ECO:0000318"/>
    <property type="project" value="GO_Central"/>
</dbReference>
<dbReference type="GO" id="GO:0046688">
    <property type="term" value="P:response to copper ion"/>
    <property type="evidence" value="ECO:0000314"/>
    <property type="project" value="UniProtKB"/>
</dbReference>
<dbReference type="CDD" id="cd23295">
    <property type="entry name" value="beta-trefoil_IL1A"/>
    <property type="match status" value="1"/>
</dbReference>
<dbReference type="FunFam" id="2.80.10.50:FF:000049">
    <property type="entry name" value="Interleukin-1 alpha"/>
    <property type="match status" value="1"/>
</dbReference>
<dbReference type="Gene3D" id="2.80.10.50">
    <property type="match status" value="1"/>
</dbReference>
<dbReference type="InterPro" id="IPR003295">
    <property type="entry name" value="IL-1_alpha"/>
</dbReference>
<dbReference type="InterPro" id="IPR020877">
    <property type="entry name" value="IL-1_CS"/>
</dbReference>
<dbReference type="InterPro" id="IPR000975">
    <property type="entry name" value="IL-1_fam"/>
</dbReference>
<dbReference type="InterPro" id="IPR003502">
    <property type="entry name" value="IL-1_propep"/>
</dbReference>
<dbReference type="InterPro" id="IPR008996">
    <property type="entry name" value="IL1/FGF"/>
</dbReference>
<dbReference type="PANTHER" id="PTHR10078:SF33">
    <property type="entry name" value="INTERLEUKIN-1 ALPHA"/>
    <property type="match status" value="1"/>
</dbReference>
<dbReference type="PANTHER" id="PTHR10078">
    <property type="entry name" value="INTERLEUKIN-1 FAMILY MEMBER"/>
    <property type="match status" value="1"/>
</dbReference>
<dbReference type="Pfam" id="PF00340">
    <property type="entry name" value="IL1"/>
    <property type="match status" value="1"/>
</dbReference>
<dbReference type="Pfam" id="PF02394">
    <property type="entry name" value="IL1_propep"/>
    <property type="match status" value="1"/>
</dbReference>
<dbReference type="PRINTS" id="PR00264">
    <property type="entry name" value="INTERLEUKIN1"/>
</dbReference>
<dbReference type="PRINTS" id="PR01358">
    <property type="entry name" value="INTRLEUKIN1A"/>
</dbReference>
<dbReference type="PRINTS" id="PR01357">
    <property type="entry name" value="INTRLEUKN1AB"/>
</dbReference>
<dbReference type="SMART" id="SM00125">
    <property type="entry name" value="IL1"/>
    <property type="match status" value="1"/>
</dbReference>
<dbReference type="SUPFAM" id="SSF50353">
    <property type="entry name" value="Cytokine"/>
    <property type="match status" value="1"/>
</dbReference>
<dbReference type="PROSITE" id="PS00253">
    <property type="entry name" value="INTERLEUKIN_1"/>
    <property type="match status" value="1"/>
</dbReference>
<accession>P01583</accession>
<accession>Q53QF9</accession>
<accession>Q7RU02</accession>
<proteinExistence type="evidence at protein level"/>
<organism>
    <name type="scientific">Homo sapiens</name>
    <name type="common">Human</name>
    <dbReference type="NCBI Taxonomy" id="9606"/>
    <lineage>
        <taxon>Eukaryota</taxon>
        <taxon>Metazoa</taxon>
        <taxon>Chordata</taxon>
        <taxon>Craniata</taxon>
        <taxon>Vertebrata</taxon>
        <taxon>Euteleostomi</taxon>
        <taxon>Mammalia</taxon>
        <taxon>Eutheria</taxon>
        <taxon>Euarchontoglires</taxon>
        <taxon>Primates</taxon>
        <taxon>Haplorrhini</taxon>
        <taxon>Catarrhini</taxon>
        <taxon>Hominidae</taxon>
        <taxon>Homo</taxon>
    </lineage>
</organism>
<name>IL1A_HUMAN</name>
<feature type="propeptide" id="PRO_0000015265" evidence="14">
    <location>
        <begin position="1"/>
        <end position="112"/>
    </location>
</feature>
<feature type="chain" id="PRO_0000015266" description="Interleukin-1 alpha">
    <location>
        <begin position="113"/>
        <end position="271"/>
    </location>
</feature>
<feature type="region of interest" description="Nuclear localization signal (NLS)" evidence="9">
    <location>
        <begin position="82"/>
        <end position="86"/>
    </location>
</feature>
<feature type="modified residue" description="N6-acetyllysine" evidence="9">
    <location>
        <position position="82"/>
    </location>
</feature>
<feature type="modified residue" description="Phosphoserine" evidence="1">
    <location>
        <position position="87"/>
    </location>
</feature>
<feature type="lipid moiety-binding region" description="N6-myristoyl lysine" evidence="15">
    <location>
        <position position="82"/>
    </location>
</feature>
<feature type="lipid moiety-binding region" description="N6-myristoyl lysine" evidence="15">
    <location>
        <position position="83"/>
    </location>
</feature>
<feature type="glycosylation site" description="N-linked (GlcNAc...) asparagine" evidence="2">
    <location>
        <position position="102"/>
    </location>
</feature>
<feature type="glycosylation site" description="N-linked (GlcNAc...) asparagine" evidence="2">
    <location>
        <position position="141"/>
    </location>
</feature>
<feature type="sequence variant" id="VAR_014304" description="In dbSNP:rs3783531." evidence="16">
    <original>R</original>
    <variation>Q</variation>
    <location>
        <position position="85"/>
    </location>
</feature>
<feature type="sequence variant" id="VAR_014305" description="In dbSNP:rs17561." evidence="8 11 16">
    <original>A</original>
    <variation>S</variation>
    <location>
        <position position="114"/>
    </location>
</feature>
<feature type="sequence variant" id="VAR_014600" description="In dbSNP:rs17562.">
    <original>N</original>
    <variation>D</variation>
    <location>
        <position position="125"/>
    </location>
</feature>
<feature type="sequence variant" id="VAR_014306" description="In dbSNP:rs3783581." evidence="16">
    <original>D</original>
    <variation>N</variation>
    <location>
        <position position="138"/>
    </location>
</feature>
<feature type="sequence variant" id="VAR_014601" description="In dbSNP:rs1801715.">
    <original>D</original>
    <variation>H</variation>
    <location>
        <position position="176"/>
    </location>
</feature>
<feature type="mutagenesis site" description="About 50% loss of cytokine secretion after DNA damage." evidence="9">
    <original>K</original>
    <variation>Q</variation>
    <location>
        <position position="82"/>
    </location>
</feature>
<feature type="strand" evidence="20">
    <location>
        <begin position="123"/>
        <end position="138"/>
    </location>
</feature>
<feature type="strand" evidence="20">
    <location>
        <begin position="143"/>
        <end position="146"/>
    </location>
</feature>
<feature type="strand" evidence="20">
    <location>
        <begin position="148"/>
        <end position="150"/>
    </location>
</feature>
<feature type="strand" evidence="20">
    <location>
        <begin position="152"/>
        <end position="155"/>
    </location>
</feature>
<feature type="helix" evidence="20">
    <location>
        <begin position="160"/>
        <end position="162"/>
    </location>
</feature>
<feature type="strand" evidence="20">
    <location>
        <begin position="166"/>
        <end position="175"/>
    </location>
</feature>
<feature type="strand" evidence="19">
    <location>
        <begin position="176"/>
        <end position="178"/>
    </location>
</feature>
<feature type="strand" evidence="20">
    <location>
        <begin position="181"/>
        <end position="186"/>
    </location>
</feature>
<feature type="strand" evidence="20">
    <location>
        <begin position="189"/>
        <end position="194"/>
    </location>
</feature>
<feature type="strand" evidence="19">
    <location>
        <begin position="198"/>
        <end position="200"/>
    </location>
</feature>
<feature type="strand" evidence="20">
    <location>
        <begin position="203"/>
        <end position="206"/>
    </location>
</feature>
<feature type="strand" evidence="20">
    <location>
        <begin position="212"/>
        <end position="215"/>
    </location>
</feature>
<feature type="helix" evidence="20">
    <location>
        <begin position="216"/>
        <end position="221"/>
    </location>
</feature>
<feature type="strand" evidence="20">
    <location>
        <begin position="223"/>
        <end position="228"/>
    </location>
</feature>
<feature type="strand" evidence="20">
    <location>
        <begin position="231"/>
        <end position="239"/>
    </location>
</feature>
<feature type="strand" evidence="20">
    <location>
        <begin position="243"/>
        <end position="246"/>
    </location>
</feature>
<feature type="strand" evidence="19">
    <location>
        <begin position="248"/>
        <end position="251"/>
    </location>
</feature>
<feature type="strand" evidence="20">
    <location>
        <begin position="253"/>
        <end position="257"/>
    </location>
</feature>
<feature type="strand" evidence="19">
    <location>
        <begin position="259"/>
        <end position="261"/>
    </location>
</feature>
<feature type="strand" evidence="20">
    <location>
        <begin position="264"/>
        <end position="267"/>
    </location>
</feature>
<sequence>MAKVPDMFEDLKNCYSENEEDSSSIDHLSLNQKSFYHVSYGPLHEGCMDQSVSLSISETSKTSKLTFKESMVVVATNGKVLKKRRLSLSQSITDDDLEAIANDSEEEIIKPRSAPFSFLSNVKYNFMRIIKYEFILNDALNQSIIRANDQYLTAAALHNLDEAVKFDMGAYKSSKDDAKITVILRISKTQLYVTAQDEDQPVLLKEMPEIPKTITGSETNLLFFWETHGTKNYFTSVAHPNLFIATKQDYWVCLAGGPPSITDFQILENQA</sequence>
<evidence type="ECO:0000250" key="1">
    <source>
        <dbReference type="UniProtKB" id="P01582"/>
    </source>
</evidence>
<evidence type="ECO:0000255" key="2"/>
<evidence type="ECO:0000269" key="3">
    <source>
    </source>
</evidence>
<evidence type="ECO:0000269" key="4">
    <source>
    </source>
</evidence>
<evidence type="ECO:0000269" key="5">
    <source>
    </source>
</evidence>
<evidence type="ECO:0000269" key="6">
    <source>
    </source>
</evidence>
<evidence type="ECO:0000269" key="7">
    <source>
    </source>
</evidence>
<evidence type="ECO:0000269" key="8">
    <source>
    </source>
</evidence>
<evidence type="ECO:0000269" key="9">
    <source>
    </source>
</evidence>
<evidence type="ECO:0000269" key="10">
    <source>
    </source>
</evidence>
<evidence type="ECO:0000269" key="11">
    <source>
    </source>
</evidence>
<evidence type="ECO:0000269" key="12">
    <source>
    </source>
</evidence>
<evidence type="ECO:0000269" key="13">
    <source>
    </source>
</evidence>
<evidence type="ECO:0000269" key="14">
    <source>
    </source>
</evidence>
<evidence type="ECO:0000269" key="15">
    <source>
    </source>
</evidence>
<evidence type="ECO:0000269" key="16">
    <source ref="10"/>
</evidence>
<evidence type="ECO:0000305" key="17"/>
<evidence type="ECO:0007744" key="18">
    <source>
        <dbReference type="PDB" id="2L5X"/>
    </source>
</evidence>
<evidence type="ECO:0007829" key="19">
    <source>
        <dbReference type="PDB" id="2KKI"/>
    </source>
</evidence>
<evidence type="ECO:0007829" key="20">
    <source>
        <dbReference type="PDB" id="5UC6"/>
    </source>
</evidence>
<keyword id="KW-0002">3D-structure</keyword>
<keyword id="KW-0007">Acetylation</keyword>
<keyword id="KW-0202">Cytokine</keyword>
<keyword id="KW-0963">Cytoplasm</keyword>
<keyword id="KW-0903">Direct protein sequencing</keyword>
<keyword id="KW-0325">Glycoprotein</keyword>
<keyword id="KW-0395">Inflammatory response</keyword>
<keyword id="KW-0449">Lipoprotein</keyword>
<keyword id="KW-0497">Mitogen</keyword>
<keyword id="KW-0519">Myristate</keyword>
<keyword id="KW-0539">Nucleus</keyword>
<keyword id="KW-0597">Phosphoprotein</keyword>
<keyword id="KW-1267">Proteomics identification</keyword>
<keyword id="KW-0666">Pyrogen</keyword>
<keyword id="KW-1185">Reference proteome</keyword>
<keyword id="KW-0964">Secreted</keyword>